<sequence>MLHPRARTMLLLSLPAVAIGIASSLILIVVMKIASVLQNLLWQRLPGTLGIAQDSPLWIIGVLTLTGIAVGLVIRFSQGHAGPDPACEPLIGAPVPPSALPGLIVALILGLAGGVSLGPEHPIMTVNIALAVAIGARLLPRVNRMEWTILASAGTIGALFGTPVAAALIFSQTLNGSSEVPLWDRLFAPLMAAAAGALTTGLFFHPHFSLPIAHYGQMEMTDILSGAIVAAIAIAAGMVAVWCLPRLHAMMHQMKNPVLVLGIGGFILGILGVIGGPVSLFKGLDEMQQMVANQAFSTSDYFLLAVIKLAALVVAAASGFRGGRIFPAVFVGVALGLMLHEHVPAVPAAITVSCAILGIVLVVTRDGWLSLFMAAVVVPNTTLLPLLCIVMLPAWLLLAGKPMMMVNRPKQQPPHDNV</sequence>
<evidence type="ECO:0000255" key="1">
    <source>
        <dbReference type="HAMAP-Rule" id="MF_01115"/>
    </source>
</evidence>
<accession>C4ZVS6</accession>
<feature type="chain" id="PRO_1000213598" description="Putative ion-transport protein YfeO">
    <location>
        <begin position="1"/>
        <end position="418"/>
    </location>
</feature>
<feature type="transmembrane region" description="Helical" evidence="1">
    <location>
        <begin position="10"/>
        <end position="30"/>
    </location>
</feature>
<feature type="transmembrane region" description="Helical" evidence="1">
    <location>
        <begin position="54"/>
        <end position="74"/>
    </location>
</feature>
<feature type="transmembrane region" description="Helical" evidence="1">
    <location>
        <begin position="99"/>
        <end position="119"/>
    </location>
</feature>
<feature type="transmembrane region" description="Helical" evidence="1">
    <location>
        <begin position="120"/>
        <end position="140"/>
    </location>
</feature>
<feature type="transmembrane region" description="Helical" evidence="1">
    <location>
        <begin position="149"/>
        <end position="169"/>
    </location>
</feature>
<feature type="transmembrane region" description="Helical" evidence="1">
    <location>
        <begin position="186"/>
        <end position="206"/>
    </location>
</feature>
<feature type="transmembrane region" description="Helical" evidence="1">
    <location>
        <begin position="223"/>
        <end position="243"/>
    </location>
</feature>
<feature type="transmembrane region" description="Helical" evidence="1">
    <location>
        <begin position="258"/>
        <end position="278"/>
    </location>
</feature>
<feature type="transmembrane region" description="Helical" evidence="1">
    <location>
        <begin position="300"/>
        <end position="320"/>
    </location>
</feature>
<feature type="transmembrane region" description="Helical" evidence="1">
    <location>
        <begin position="322"/>
        <end position="342"/>
    </location>
</feature>
<feature type="transmembrane region" description="Helical" evidence="1">
    <location>
        <begin position="343"/>
        <end position="363"/>
    </location>
</feature>
<feature type="transmembrane region" description="Helical" evidence="1">
    <location>
        <begin position="371"/>
        <end position="391"/>
    </location>
</feature>
<comment type="subcellular location">
    <subcellularLocation>
        <location evidence="1">Cell membrane</location>
        <topology evidence="1">Multi-pass membrane protein</topology>
    </subcellularLocation>
</comment>
<comment type="similarity">
    <text evidence="1">Belongs to the chloride channel (TC 2.A.49) family.</text>
</comment>
<reference key="1">
    <citation type="journal article" date="2009" name="J. Bacteriol.">
        <title>Genomic sequencing reveals regulatory mutations and recombinational events in the widely used MC4100 lineage of Escherichia coli K-12.</title>
        <authorList>
            <person name="Ferenci T."/>
            <person name="Zhou Z."/>
            <person name="Betteridge T."/>
            <person name="Ren Y."/>
            <person name="Liu Y."/>
            <person name="Feng L."/>
            <person name="Reeves P.R."/>
            <person name="Wang L."/>
        </authorList>
    </citation>
    <scope>NUCLEOTIDE SEQUENCE [LARGE SCALE GENOMIC DNA]</scope>
    <source>
        <strain>K12 / MC4100 / BW2952</strain>
    </source>
</reference>
<protein>
    <recommendedName>
        <fullName evidence="1">Putative ion-transport protein YfeO</fullName>
    </recommendedName>
</protein>
<name>YFEO_ECOBW</name>
<organism>
    <name type="scientific">Escherichia coli (strain K12 / MC4100 / BW2952)</name>
    <dbReference type="NCBI Taxonomy" id="595496"/>
    <lineage>
        <taxon>Bacteria</taxon>
        <taxon>Pseudomonadati</taxon>
        <taxon>Pseudomonadota</taxon>
        <taxon>Gammaproteobacteria</taxon>
        <taxon>Enterobacterales</taxon>
        <taxon>Enterobacteriaceae</taxon>
        <taxon>Escherichia</taxon>
    </lineage>
</organism>
<keyword id="KW-1003">Cell membrane</keyword>
<keyword id="KW-0407">Ion channel</keyword>
<keyword id="KW-0406">Ion transport</keyword>
<keyword id="KW-0472">Membrane</keyword>
<keyword id="KW-0812">Transmembrane</keyword>
<keyword id="KW-1133">Transmembrane helix</keyword>
<keyword id="KW-0813">Transport</keyword>
<gene>
    <name evidence="1" type="primary">yfeO</name>
    <name type="ordered locus">BWG_2157</name>
</gene>
<proteinExistence type="inferred from homology"/>
<dbReference type="EMBL" id="CP001396">
    <property type="protein sequence ID" value="ACR64594.1"/>
    <property type="molecule type" value="Genomic_DNA"/>
</dbReference>
<dbReference type="RefSeq" id="WP_000903148.1">
    <property type="nucleotide sequence ID" value="NC_012759.1"/>
</dbReference>
<dbReference type="SMR" id="C4ZVS6"/>
<dbReference type="KEGG" id="ebw:BWG_2157"/>
<dbReference type="HOGENOM" id="CLU_053130_0_0_6"/>
<dbReference type="GO" id="GO:0005886">
    <property type="term" value="C:plasma membrane"/>
    <property type="evidence" value="ECO:0007669"/>
    <property type="project" value="UniProtKB-SubCell"/>
</dbReference>
<dbReference type="GO" id="GO:0015108">
    <property type="term" value="F:chloride transmembrane transporter activity"/>
    <property type="evidence" value="ECO:0007669"/>
    <property type="project" value="InterPro"/>
</dbReference>
<dbReference type="GO" id="GO:0005216">
    <property type="term" value="F:monoatomic ion channel activity"/>
    <property type="evidence" value="ECO:0007669"/>
    <property type="project" value="UniProtKB-UniRule"/>
</dbReference>
<dbReference type="CDD" id="cd00400">
    <property type="entry name" value="Voltage_gated_ClC"/>
    <property type="match status" value="1"/>
</dbReference>
<dbReference type="FunFam" id="1.10.3080.10:FF:000007">
    <property type="entry name" value="Putative ion-transport protein YfeO"/>
    <property type="match status" value="1"/>
</dbReference>
<dbReference type="Gene3D" id="1.10.3080.10">
    <property type="entry name" value="Clc chloride channel"/>
    <property type="match status" value="1"/>
</dbReference>
<dbReference type="HAMAP" id="MF_01115">
    <property type="entry name" value="CLC_YfeO"/>
    <property type="match status" value="1"/>
</dbReference>
<dbReference type="InterPro" id="IPR022969">
    <property type="entry name" value="Chloride_channel_YfeO"/>
</dbReference>
<dbReference type="InterPro" id="IPR014743">
    <property type="entry name" value="Cl-channel_core"/>
</dbReference>
<dbReference type="InterPro" id="IPR001807">
    <property type="entry name" value="ClC"/>
</dbReference>
<dbReference type="InterPro" id="IPR050368">
    <property type="entry name" value="ClC-type_chloride_channel"/>
</dbReference>
<dbReference type="NCBIfam" id="NF002971">
    <property type="entry name" value="PRK03655.1"/>
    <property type="match status" value="1"/>
</dbReference>
<dbReference type="PANTHER" id="PTHR43427">
    <property type="entry name" value="CHLORIDE CHANNEL PROTEIN CLC-E"/>
    <property type="match status" value="1"/>
</dbReference>
<dbReference type="PANTHER" id="PTHR43427:SF9">
    <property type="entry name" value="ION-TRANSPORT PROTEIN YFEO-RELATED"/>
    <property type="match status" value="1"/>
</dbReference>
<dbReference type="Pfam" id="PF00654">
    <property type="entry name" value="Voltage_CLC"/>
    <property type="match status" value="1"/>
</dbReference>
<dbReference type="PRINTS" id="PR00762">
    <property type="entry name" value="CLCHANNEL"/>
</dbReference>
<dbReference type="SUPFAM" id="SSF81340">
    <property type="entry name" value="Clc chloride channel"/>
    <property type="match status" value="1"/>
</dbReference>